<keyword id="KW-0963">Cytoplasm</keyword>
<keyword id="KW-0378">Hydrolase</keyword>
<keyword id="KW-0479">Metal-binding</keyword>
<keyword id="KW-0547">Nucleotide-binding</keyword>
<keyword id="KW-1185">Reference proteome</keyword>
<sequence>MRILLSNDDGVHAPGIQTLAKALREFADVQVVAPDRNRSGASNSLTLESSLRTFTFENGDIAVQMGTPTDCVYLGVNALMRPRPDIVVSGINAGPNLGDDVIYSGTVAAAMEGRHLGFPALAVSLDGHKHYDTAAAVTCSILRALCKEPLRTGRILNINVPDLPLDQIKGIRVTRCGTRHPADQVIPQQDPRGNTLYWIGPPGGKCDAGPGTDFAAVDEGYVSITPLHVDLTAHSAQDVVSDWLNSVGVGTQW</sequence>
<accession>A7ZQI8</accession>
<name>SURE_ECO24</name>
<feature type="chain" id="PRO_1000057410" description="5'/3'-nucleotidase SurE">
    <location>
        <begin position="1"/>
        <end position="253"/>
    </location>
</feature>
<feature type="binding site" evidence="1">
    <location>
        <position position="8"/>
    </location>
    <ligand>
        <name>a divalent metal cation</name>
        <dbReference type="ChEBI" id="CHEBI:60240"/>
    </ligand>
</feature>
<feature type="binding site" evidence="1">
    <location>
        <position position="9"/>
    </location>
    <ligand>
        <name>a divalent metal cation</name>
        <dbReference type="ChEBI" id="CHEBI:60240"/>
    </ligand>
</feature>
<feature type="binding site" evidence="1">
    <location>
        <position position="39"/>
    </location>
    <ligand>
        <name>a divalent metal cation</name>
        <dbReference type="ChEBI" id="CHEBI:60240"/>
    </ligand>
</feature>
<feature type="binding site" evidence="1">
    <location>
        <position position="92"/>
    </location>
    <ligand>
        <name>a divalent metal cation</name>
        <dbReference type="ChEBI" id="CHEBI:60240"/>
    </ligand>
</feature>
<evidence type="ECO:0000255" key="1">
    <source>
        <dbReference type="HAMAP-Rule" id="MF_00060"/>
    </source>
</evidence>
<comment type="function">
    <text evidence="1">Nucleotidase with a broad substrate specificity as it can dephosphorylate various ribo- and deoxyribonucleoside 5'-monophosphates and ribonucleoside 3'-monophosphates with highest affinity to 3'-AMP. Also hydrolyzes polyphosphate (exopolyphosphatase activity) with the preference for short-chain-length substrates (P20-25). Might be involved in the regulation of dNTP and NTP pools, and in the turnover of 3'-mononucleotides produced by numerous intracellular RNases (T1, T2, and F) during the degradation of various RNAs.</text>
</comment>
<comment type="catalytic activity">
    <reaction evidence="1">
        <text>a ribonucleoside 5'-phosphate + H2O = a ribonucleoside + phosphate</text>
        <dbReference type="Rhea" id="RHEA:12484"/>
        <dbReference type="ChEBI" id="CHEBI:15377"/>
        <dbReference type="ChEBI" id="CHEBI:18254"/>
        <dbReference type="ChEBI" id="CHEBI:43474"/>
        <dbReference type="ChEBI" id="CHEBI:58043"/>
        <dbReference type="EC" id="3.1.3.5"/>
    </reaction>
</comment>
<comment type="catalytic activity">
    <reaction evidence="1">
        <text>a ribonucleoside 3'-phosphate + H2O = a ribonucleoside + phosphate</text>
        <dbReference type="Rhea" id="RHEA:10144"/>
        <dbReference type="ChEBI" id="CHEBI:13197"/>
        <dbReference type="ChEBI" id="CHEBI:15377"/>
        <dbReference type="ChEBI" id="CHEBI:18254"/>
        <dbReference type="ChEBI" id="CHEBI:43474"/>
        <dbReference type="EC" id="3.1.3.6"/>
    </reaction>
</comment>
<comment type="catalytic activity">
    <reaction evidence="1">
        <text>[phosphate](n) + H2O = [phosphate](n-1) + phosphate + H(+)</text>
        <dbReference type="Rhea" id="RHEA:21528"/>
        <dbReference type="Rhea" id="RHEA-COMP:9859"/>
        <dbReference type="Rhea" id="RHEA-COMP:14279"/>
        <dbReference type="ChEBI" id="CHEBI:15377"/>
        <dbReference type="ChEBI" id="CHEBI:15378"/>
        <dbReference type="ChEBI" id="CHEBI:16838"/>
        <dbReference type="ChEBI" id="CHEBI:43474"/>
        <dbReference type="EC" id="3.6.1.11"/>
    </reaction>
</comment>
<comment type="cofactor">
    <cofactor evidence="1">
        <name>a divalent metal cation</name>
        <dbReference type="ChEBI" id="CHEBI:60240"/>
    </cofactor>
    <text evidence="1">Binds 1 divalent metal cation per subunit.</text>
</comment>
<comment type="subcellular location">
    <subcellularLocation>
        <location evidence="1">Cytoplasm</location>
    </subcellularLocation>
</comment>
<comment type="similarity">
    <text evidence="1">Belongs to the SurE nucleotidase family.</text>
</comment>
<gene>
    <name evidence="1" type="primary">surE</name>
    <name type="ordered locus">EcE24377A_3045</name>
</gene>
<protein>
    <recommendedName>
        <fullName evidence="1">5'/3'-nucleotidase SurE</fullName>
        <ecNumber evidence="1">3.1.3.5</ecNumber>
        <ecNumber evidence="1">3.1.3.6</ecNumber>
    </recommendedName>
    <alternativeName>
        <fullName evidence="1">Exopolyphosphatase</fullName>
        <ecNumber evidence="1">3.6.1.11</ecNumber>
    </alternativeName>
    <alternativeName>
        <fullName evidence="1">Nucleoside monophosphate phosphohydrolase</fullName>
    </alternativeName>
</protein>
<dbReference type="EC" id="3.1.3.5" evidence="1"/>
<dbReference type="EC" id="3.1.3.6" evidence="1"/>
<dbReference type="EC" id="3.6.1.11" evidence="1"/>
<dbReference type="EMBL" id="CP000800">
    <property type="protein sequence ID" value="ABV17509.1"/>
    <property type="molecule type" value="Genomic_DNA"/>
</dbReference>
<dbReference type="RefSeq" id="WP_001295182.1">
    <property type="nucleotide sequence ID" value="NC_009801.1"/>
</dbReference>
<dbReference type="SMR" id="A7ZQI8"/>
<dbReference type="GeneID" id="93779262"/>
<dbReference type="KEGG" id="ecw:EcE24377A_3045"/>
<dbReference type="HOGENOM" id="CLU_045192_1_2_6"/>
<dbReference type="Proteomes" id="UP000001122">
    <property type="component" value="Chromosome"/>
</dbReference>
<dbReference type="GO" id="GO:0005737">
    <property type="term" value="C:cytoplasm"/>
    <property type="evidence" value="ECO:0007669"/>
    <property type="project" value="UniProtKB-SubCell"/>
</dbReference>
<dbReference type="GO" id="GO:0008254">
    <property type="term" value="F:3'-nucleotidase activity"/>
    <property type="evidence" value="ECO:0007669"/>
    <property type="project" value="UniProtKB-UniRule"/>
</dbReference>
<dbReference type="GO" id="GO:0008253">
    <property type="term" value="F:5'-nucleotidase activity"/>
    <property type="evidence" value="ECO:0007669"/>
    <property type="project" value="UniProtKB-UniRule"/>
</dbReference>
<dbReference type="GO" id="GO:0004309">
    <property type="term" value="F:exopolyphosphatase activity"/>
    <property type="evidence" value="ECO:0007669"/>
    <property type="project" value="UniProtKB-UniRule"/>
</dbReference>
<dbReference type="GO" id="GO:0046872">
    <property type="term" value="F:metal ion binding"/>
    <property type="evidence" value="ECO:0007669"/>
    <property type="project" value="UniProtKB-UniRule"/>
</dbReference>
<dbReference type="GO" id="GO:0000166">
    <property type="term" value="F:nucleotide binding"/>
    <property type="evidence" value="ECO:0007669"/>
    <property type="project" value="UniProtKB-KW"/>
</dbReference>
<dbReference type="FunFam" id="3.40.1210.10:FF:000001">
    <property type="entry name" value="5'/3'-nucleotidase SurE"/>
    <property type="match status" value="1"/>
</dbReference>
<dbReference type="Gene3D" id="3.40.1210.10">
    <property type="entry name" value="Survival protein SurE-like phosphatase/nucleotidase"/>
    <property type="match status" value="1"/>
</dbReference>
<dbReference type="HAMAP" id="MF_00060">
    <property type="entry name" value="SurE"/>
    <property type="match status" value="1"/>
</dbReference>
<dbReference type="InterPro" id="IPR030048">
    <property type="entry name" value="SurE"/>
</dbReference>
<dbReference type="InterPro" id="IPR002828">
    <property type="entry name" value="SurE-like_Pase/nucleotidase"/>
</dbReference>
<dbReference type="InterPro" id="IPR036523">
    <property type="entry name" value="SurE-like_sf"/>
</dbReference>
<dbReference type="NCBIfam" id="NF001488">
    <property type="entry name" value="PRK00346.1-1"/>
    <property type="match status" value="1"/>
</dbReference>
<dbReference type="NCBIfam" id="NF001489">
    <property type="entry name" value="PRK00346.1-3"/>
    <property type="match status" value="1"/>
</dbReference>
<dbReference type="NCBIfam" id="NF001490">
    <property type="entry name" value="PRK00346.1-4"/>
    <property type="match status" value="1"/>
</dbReference>
<dbReference type="NCBIfam" id="TIGR00087">
    <property type="entry name" value="surE"/>
    <property type="match status" value="1"/>
</dbReference>
<dbReference type="PANTHER" id="PTHR30457">
    <property type="entry name" value="5'-NUCLEOTIDASE SURE"/>
    <property type="match status" value="1"/>
</dbReference>
<dbReference type="PANTHER" id="PTHR30457:SF12">
    <property type="entry name" value="5'_3'-NUCLEOTIDASE SURE"/>
    <property type="match status" value="1"/>
</dbReference>
<dbReference type="Pfam" id="PF01975">
    <property type="entry name" value="SurE"/>
    <property type="match status" value="1"/>
</dbReference>
<dbReference type="SUPFAM" id="SSF64167">
    <property type="entry name" value="SurE-like"/>
    <property type="match status" value="1"/>
</dbReference>
<reference key="1">
    <citation type="journal article" date="2008" name="J. Bacteriol.">
        <title>The pangenome structure of Escherichia coli: comparative genomic analysis of E. coli commensal and pathogenic isolates.</title>
        <authorList>
            <person name="Rasko D.A."/>
            <person name="Rosovitz M.J."/>
            <person name="Myers G.S.A."/>
            <person name="Mongodin E.F."/>
            <person name="Fricke W.F."/>
            <person name="Gajer P."/>
            <person name="Crabtree J."/>
            <person name="Sebaihia M."/>
            <person name="Thomson N.R."/>
            <person name="Chaudhuri R."/>
            <person name="Henderson I.R."/>
            <person name="Sperandio V."/>
            <person name="Ravel J."/>
        </authorList>
    </citation>
    <scope>NUCLEOTIDE SEQUENCE [LARGE SCALE GENOMIC DNA]</scope>
    <source>
        <strain>E24377A / ETEC</strain>
    </source>
</reference>
<proteinExistence type="inferred from homology"/>
<organism>
    <name type="scientific">Escherichia coli O139:H28 (strain E24377A / ETEC)</name>
    <dbReference type="NCBI Taxonomy" id="331111"/>
    <lineage>
        <taxon>Bacteria</taxon>
        <taxon>Pseudomonadati</taxon>
        <taxon>Pseudomonadota</taxon>
        <taxon>Gammaproteobacteria</taxon>
        <taxon>Enterobacterales</taxon>
        <taxon>Enterobacteriaceae</taxon>
        <taxon>Escherichia</taxon>
    </lineage>
</organism>